<feature type="chain" id="PRO_0000201149" description="Biodegradative arginine decarboxylase">
    <location>
        <begin position="1"/>
        <end position="755"/>
    </location>
</feature>
<feature type="modified residue" description="N6-(pyridoxal phosphate)lysine" evidence="2 6">
    <location>
        <position position="386"/>
    </location>
</feature>
<feature type="sequence conflict" description="In Ref. 5; M18425." evidence="3" ref="5">
    <original>L</original>
    <variation>P</variation>
    <location>
        <position position="75"/>
    </location>
</feature>
<feature type="strand" evidence="7">
    <location>
        <begin position="2"/>
        <end position="6"/>
    </location>
</feature>
<feature type="helix" evidence="7">
    <location>
        <begin position="15"/>
        <end position="30"/>
    </location>
</feature>
<feature type="strand" evidence="7">
    <location>
        <begin position="34"/>
        <end position="40"/>
    </location>
</feature>
<feature type="helix" evidence="7">
    <location>
        <begin position="41"/>
        <end position="48"/>
    </location>
</feature>
<feature type="turn" evidence="7">
    <location>
        <begin position="49"/>
        <end position="51"/>
    </location>
</feature>
<feature type="strand" evidence="7">
    <location>
        <begin position="55"/>
        <end position="60"/>
    </location>
</feature>
<feature type="helix" evidence="7">
    <location>
        <begin position="66"/>
        <end position="82"/>
    </location>
</feature>
<feature type="strand" evidence="7">
    <location>
        <begin position="88"/>
        <end position="92"/>
    </location>
</feature>
<feature type="helix" evidence="7">
    <location>
        <begin position="94"/>
        <end position="99"/>
    </location>
</feature>
<feature type="helix" evidence="7">
    <location>
        <begin position="103"/>
        <end position="108"/>
    </location>
</feature>
<feature type="strand" evidence="7">
    <location>
        <begin position="110"/>
        <end position="114"/>
    </location>
</feature>
<feature type="turn" evidence="7">
    <location>
        <begin position="115"/>
        <end position="117"/>
    </location>
</feature>
<feature type="helix" evidence="7">
    <location>
        <begin position="120"/>
        <end position="136"/>
    </location>
</feature>
<feature type="helix" evidence="7">
    <location>
        <begin position="141"/>
        <end position="150"/>
    </location>
</feature>
<feature type="strand" evidence="7">
    <location>
        <begin position="156"/>
        <end position="160"/>
    </location>
</feature>
<feature type="turn" evidence="7">
    <location>
        <begin position="161"/>
        <end position="166"/>
    </location>
</feature>
<feature type="helix" evidence="7">
    <location>
        <begin position="167"/>
        <end position="170"/>
    </location>
</feature>
<feature type="helix" evidence="7">
    <location>
        <begin position="172"/>
        <end position="181"/>
    </location>
</feature>
<feature type="helix" evidence="7">
    <location>
        <begin position="183"/>
        <end position="187"/>
    </location>
</feature>
<feature type="turn" evidence="7">
    <location>
        <begin position="194"/>
        <end position="197"/>
    </location>
</feature>
<feature type="turn" evidence="7">
    <location>
        <begin position="200"/>
        <end position="203"/>
    </location>
</feature>
<feature type="helix" evidence="7">
    <location>
        <begin position="205"/>
        <end position="218"/>
    </location>
</feature>
<feature type="strand" evidence="7">
    <location>
        <begin position="221"/>
        <end position="228"/>
    </location>
</feature>
<feature type="helix" evidence="7">
    <location>
        <begin position="229"/>
        <end position="241"/>
    </location>
</feature>
<feature type="strand" evidence="7">
    <location>
        <begin position="247"/>
        <end position="253"/>
    </location>
</feature>
<feature type="helix" evidence="7">
    <location>
        <begin position="256"/>
        <end position="265"/>
    </location>
</feature>
<feature type="strand" evidence="7">
    <location>
        <begin position="268"/>
        <end position="272"/>
    </location>
</feature>
<feature type="helix" evidence="7">
    <location>
        <begin position="287"/>
        <end position="290"/>
    </location>
</feature>
<feature type="helix" evidence="7">
    <location>
        <begin position="292"/>
        <end position="301"/>
    </location>
</feature>
<feature type="turn" evidence="7">
    <location>
        <begin position="303"/>
        <end position="305"/>
    </location>
</feature>
<feature type="helix" evidence="7">
    <location>
        <begin position="306"/>
        <end position="308"/>
    </location>
</feature>
<feature type="strand" evidence="7">
    <location>
        <begin position="316"/>
        <end position="321"/>
    </location>
</feature>
<feature type="strand" evidence="7">
    <location>
        <begin position="325"/>
        <end position="328"/>
    </location>
</feature>
<feature type="helix" evidence="7">
    <location>
        <begin position="330"/>
        <end position="337"/>
    </location>
</feature>
<feature type="turn" evidence="7">
    <location>
        <begin position="338"/>
        <end position="340"/>
    </location>
</feature>
<feature type="strand" evidence="7">
    <location>
        <begin position="342"/>
        <end position="347"/>
    </location>
</feature>
<feature type="helix" evidence="7">
    <location>
        <begin position="354"/>
        <end position="356"/>
    </location>
</feature>
<feature type="helix" evidence="7">
    <location>
        <begin position="358"/>
        <end position="360"/>
    </location>
</feature>
<feature type="strand" evidence="7">
    <location>
        <begin position="363"/>
        <end position="366"/>
    </location>
</feature>
<feature type="strand" evidence="7">
    <location>
        <begin position="374"/>
        <end position="383"/>
    </location>
</feature>
<feature type="turn" evidence="7">
    <location>
        <begin position="384"/>
        <end position="386"/>
    </location>
</feature>
<feature type="strand" evidence="7">
    <location>
        <begin position="387"/>
        <end position="389"/>
    </location>
</feature>
<feature type="strand" evidence="7">
    <location>
        <begin position="395"/>
        <end position="400"/>
    </location>
</feature>
<feature type="helix" evidence="7">
    <location>
        <begin position="408"/>
        <end position="417"/>
    </location>
</feature>
<feature type="helix" evidence="7">
    <location>
        <begin position="425"/>
        <end position="438"/>
    </location>
</feature>
<feature type="helix" evidence="7">
    <location>
        <begin position="441"/>
        <end position="469"/>
    </location>
</feature>
<feature type="turn" evidence="7">
    <location>
        <begin position="470"/>
        <end position="472"/>
    </location>
</feature>
<feature type="strand" evidence="7">
    <location>
        <begin position="477"/>
        <end position="480"/>
    </location>
</feature>
<feature type="strand" evidence="7">
    <location>
        <begin position="482"/>
        <end position="485"/>
    </location>
</feature>
<feature type="turn" evidence="7">
    <location>
        <begin position="487"/>
        <end position="489"/>
    </location>
</feature>
<feature type="strand" evidence="7">
    <location>
        <begin position="492"/>
        <end position="494"/>
    </location>
</feature>
<feature type="helix" evidence="7">
    <location>
        <begin position="495"/>
        <end position="497"/>
    </location>
</feature>
<feature type="helix" evidence="7">
    <location>
        <begin position="500"/>
        <end position="505"/>
    </location>
</feature>
<feature type="helix" evidence="7">
    <location>
        <begin position="507"/>
        <end position="509"/>
    </location>
</feature>
<feature type="turn" evidence="7">
    <location>
        <begin position="517"/>
        <end position="519"/>
    </location>
</feature>
<feature type="strand" evidence="7">
    <location>
        <begin position="528"/>
        <end position="531"/>
    </location>
</feature>
<feature type="strand" evidence="7">
    <location>
        <begin position="535"/>
        <end position="539"/>
    </location>
</feature>
<feature type="strand" evidence="7">
    <location>
        <begin position="547"/>
        <end position="549"/>
    </location>
</feature>
<feature type="helix" evidence="7">
    <location>
        <begin position="556"/>
        <end position="564"/>
    </location>
</feature>
<feature type="turn" evidence="7">
    <location>
        <begin position="565"/>
        <end position="567"/>
    </location>
</feature>
<feature type="strand" evidence="7">
    <location>
        <begin position="571"/>
        <end position="573"/>
    </location>
</feature>
<feature type="strand" evidence="7">
    <location>
        <begin position="575"/>
        <end position="581"/>
    </location>
</feature>
<feature type="turn" evidence="7">
    <location>
        <begin position="588"/>
        <end position="591"/>
    </location>
</feature>
<feature type="helix" evidence="7">
    <location>
        <begin position="592"/>
        <end position="607"/>
    </location>
</feature>
<feature type="helix" evidence="7">
    <location>
        <begin position="611"/>
        <end position="614"/>
    </location>
</feature>
<feature type="helix" evidence="7">
    <location>
        <begin position="616"/>
        <end position="621"/>
    </location>
</feature>
<feature type="turn" evidence="7">
    <location>
        <begin position="623"/>
        <end position="625"/>
    </location>
</feature>
<feature type="helix" evidence="7">
    <location>
        <begin position="631"/>
        <end position="645"/>
    </location>
</feature>
<feature type="helix" evidence="7">
    <location>
        <begin position="647"/>
        <end position="656"/>
    </location>
</feature>
<feature type="strand" evidence="7">
    <location>
        <begin position="661"/>
        <end position="663"/>
    </location>
</feature>
<feature type="helix" evidence="7">
    <location>
        <begin position="665"/>
        <end position="673"/>
    </location>
</feature>
<feature type="strand" evidence="7">
    <location>
        <begin position="677"/>
        <end position="681"/>
    </location>
</feature>
<feature type="helix" evidence="7">
    <location>
        <begin position="682"/>
        <end position="684"/>
    </location>
</feature>
<feature type="strand" evidence="7">
    <location>
        <begin position="689"/>
        <end position="692"/>
    </location>
</feature>
<feature type="strand" evidence="7">
    <location>
        <begin position="694"/>
        <end position="696"/>
    </location>
</feature>
<feature type="turn" evidence="7">
    <location>
        <begin position="697"/>
        <end position="699"/>
    </location>
</feature>
<feature type="helix" evidence="7">
    <location>
        <begin position="716"/>
        <end position="730"/>
    </location>
</feature>
<feature type="strand" evidence="7">
    <location>
        <begin position="741"/>
        <end position="744"/>
    </location>
</feature>
<feature type="strand" evidence="7">
    <location>
        <begin position="747"/>
        <end position="753"/>
    </location>
</feature>
<gene>
    <name type="primary">adiA</name>
    <name type="synonym">adi</name>
    <name type="ordered locus">b4117</name>
    <name type="ordered locus">JW5731</name>
</gene>
<comment type="function">
    <text evidence="4 5">Component of the acid-resistance (AR) system allowing enteric pathogens to survive the acidic environment in the stomach (Probable). ADC can be found in two forms: biodegradative (this enzyme) and biosynthetic (speA). The biodegradative form plays a role in regulating pH by consuming proteins. Converts arginine imported by AdiC to agmatine which is then exported by AdiC (Probable).</text>
</comment>
<comment type="catalytic activity">
    <reaction evidence="1">
        <text>L-arginine + H(+) = agmatine + CO2</text>
        <dbReference type="Rhea" id="RHEA:17641"/>
        <dbReference type="ChEBI" id="CHEBI:15378"/>
        <dbReference type="ChEBI" id="CHEBI:16526"/>
        <dbReference type="ChEBI" id="CHEBI:32682"/>
        <dbReference type="ChEBI" id="CHEBI:58145"/>
        <dbReference type="EC" id="4.1.1.19"/>
    </reaction>
</comment>
<comment type="cofactor">
    <cofactor evidence="2">
        <name>pyridoxal 5'-phosphate</name>
        <dbReference type="ChEBI" id="CHEBI:597326"/>
    </cofactor>
    <text evidence="2">Binds one cofactor per subunit.</text>
</comment>
<comment type="activity regulation">
    <text evidence="5">Homodimers are probably inactive, their assembly into a homodecamer at low pH requires neutralization of negatively charged residues. This uses cytoplasmic protons, contributing pH regulation and stabilizes the homodecamer.</text>
</comment>
<comment type="subunit">
    <text evidence="2">Homodecamer. The basic unit is a homodimer, organized into a ring of giving a pentamer of five homodimers.</text>
</comment>
<comment type="subcellular location">
    <subcellularLocation>
        <location>Cytoplasm</location>
    </subcellularLocation>
</comment>
<comment type="induction">
    <text evidence="1">Under conditions of acidic pH, anaerobiosis and rich medium. Forms an operon with downstream adiY but not (further) downstream adiC.</text>
</comment>
<comment type="disruption phenotype">
    <text evidence="1">Loss of formation of agmatine, loss of arginine-dependent acid resistance.</text>
</comment>
<comment type="similarity">
    <text evidence="3">Belongs to the Orn/Lys/Arg decarboxylase class-I family.</text>
</comment>
<comment type="sequence caution" evidence="3">
    <conflict type="erroneous initiation">
        <sequence resource="EMBL-CDS" id="AAA97017"/>
    </conflict>
    <text>Extended N-terminus.</text>
</comment>
<comment type="sequence caution" evidence="3">
    <conflict type="erroneous initiation">
        <sequence resource="EMBL-CDS" id="BAE78119"/>
    </conflict>
    <text>Extended N-terminus.</text>
</comment>
<sequence length="755" mass="84425">MKVLIVESEFLHQDTWVGNAVERLADALSQQNVTVIKSTSFDDGFAILSSNEAIDCLMFSYQMEHPDEHQNVRQLIGKLHERQQNVPVFLLGDREKALAAMDRDLLELVDEFAWILEDTADFIAGRAVAAMTRYRQQLLPPLFSALMKYSDIHEYSWAAPGHQGGVGFTKTPAGRFYHDYYGENLFRTDMGIERTSLGSLLDHTGAFGESEKYAARVFGADRSWSVVVGTSGSNRTIMQACMTDNDVVVVDRNCHKSIEQGLMLTGAKPVYMVPSRNRYGIIGPIYPQEMQPETLQKKISESPLTKDKAGQKPSYCVVTNCTYDGVCYNAKEAQDLLEKTSDRLHFDEAWYGYARFNPIYADHYAMRGEPGDHNGPTVFATHSTHKLLNALSQASYIHVREGRGAINFSRFNQAYMMHATTSPLYAICASNDVAVSMMDGNSGLSLTQEVIDEAVDFRQAMARLYKEFTADGSWFFKPWNKEVVTDPQTGKTYDFADAPTKLLTTVQDCWVMHPGESWHGFKDIPDNWSMLDPIKVSILAPGMGEDGELEETGVPAALVTAWLGRHGIVPTRTTDFQIMFLFSMGVTRGKWGTLVNTLCSFKRHYDANTPLAQVMPELVEQYPDTYANMGIHDLGDTMFAWLKENNPGARLNEAYSGLPVAEVTPREAYNAIVDNNVELVSIENLPGRIAANSVIPYPPGIPMLLSGENFGDKNSPQVSYLRSLQSWDHHFPGFEHETEGTEIIDGIYHVMCVKA</sequence>
<keyword id="KW-0002">3D-structure</keyword>
<keyword id="KW-0963">Cytoplasm</keyword>
<keyword id="KW-0210">Decarboxylase</keyword>
<keyword id="KW-0903">Direct protein sequencing</keyword>
<keyword id="KW-0456">Lyase</keyword>
<keyword id="KW-0663">Pyridoxal phosphate</keyword>
<keyword id="KW-1185">Reference proteome</keyword>
<evidence type="ECO:0000269" key="1">
    <source>
    </source>
</evidence>
<evidence type="ECO:0000269" key="2">
    <source>
    </source>
</evidence>
<evidence type="ECO:0000305" key="3"/>
<evidence type="ECO:0000305" key="4">
    <source>
    </source>
</evidence>
<evidence type="ECO:0000305" key="5">
    <source>
    </source>
</evidence>
<evidence type="ECO:0007744" key="6">
    <source>
        <dbReference type="PDB" id="2VYC"/>
    </source>
</evidence>
<evidence type="ECO:0007829" key="7">
    <source>
        <dbReference type="PDB" id="2VYC"/>
    </source>
</evidence>
<organism>
    <name type="scientific">Escherichia coli (strain K12)</name>
    <dbReference type="NCBI Taxonomy" id="83333"/>
    <lineage>
        <taxon>Bacteria</taxon>
        <taxon>Pseudomonadati</taxon>
        <taxon>Pseudomonadota</taxon>
        <taxon>Gammaproteobacteria</taxon>
        <taxon>Enterobacterales</taxon>
        <taxon>Enterobacteriaceae</taxon>
        <taxon>Escherichia</taxon>
    </lineage>
</organism>
<dbReference type="EC" id="4.1.1.19" evidence="1"/>
<dbReference type="EMBL" id="M93362">
    <property type="protein sequence ID" value="AAA23481.1"/>
    <property type="molecule type" value="Genomic_DNA"/>
</dbReference>
<dbReference type="EMBL" id="U14003">
    <property type="protein sequence ID" value="AAA97017.1"/>
    <property type="status" value="ALT_INIT"/>
    <property type="molecule type" value="Genomic_DNA"/>
</dbReference>
<dbReference type="EMBL" id="U00096">
    <property type="protein sequence ID" value="AAC77078.2"/>
    <property type="molecule type" value="Genomic_DNA"/>
</dbReference>
<dbReference type="EMBL" id="AP009048">
    <property type="protein sequence ID" value="BAE78119.1"/>
    <property type="status" value="ALT_INIT"/>
    <property type="molecule type" value="Genomic_DNA"/>
</dbReference>
<dbReference type="EMBL" id="M18425">
    <property type="status" value="NOT_ANNOTATED_CDS"/>
    <property type="molecule type" value="Genomic_DNA"/>
</dbReference>
<dbReference type="PIR" id="S56346">
    <property type="entry name" value="S56346"/>
</dbReference>
<dbReference type="RefSeq" id="NP_418541.2">
    <property type="nucleotide sequence ID" value="NC_000913.3"/>
</dbReference>
<dbReference type="RefSeq" id="WP_001381593.1">
    <property type="nucleotide sequence ID" value="NZ_SSZK01000018.1"/>
</dbReference>
<dbReference type="PDB" id="2VYC">
    <property type="method" value="X-ray"/>
    <property type="resolution" value="2.40 A"/>
    <property type="chains" value="A/B/C/D/E/F/G/H/I/J=1-755"/>
</dbReference>
<dbReference type="PDBsum" id="2VYC"/>
<dbReference type="SMR" id="P28629"/>
<dbReference type="BioGRID" id="4263079">
    <property type="interactions" value="24"/>
</dbReference>
<dbReference type="DIP" id="DIP-2903N"/>
<dbReference type="FunCoup" id="P28629">
    <property type="interactions" value="172"/>
</dbReference>
<dbReference type="IntAct" id="P28629">
    <property type="interactions" value="6"/>
</dbReference>
<dbReference type="STRING" id="511145.b4117"/>
<dbReference type="PaxDb" id="511145-b4117"/>
<dbReference type="EnsemblBacteria" id="AAC77078">
    <property type="protein sequence ID" value="AAC77078"/>
    <property type="gene ID" value="b4117"/>
</dbReference>
<dbReference type="GeneID" id="948638"/>
<dbReference type="KEGG" id="ecj:JW5731"/>
<dbReference type="KEGG" id="eco:b4117"/>
<dbReference type="PATRIC" id="fig|511145.12.peg.4248"/>
<dbReference type="EchoBASE" id="EB1464"/>
<dbReference type="eggNOG" id="COG1982">
    <property type="taxonomic scope" value="Bacteria"/>
</dbReference>
<dbReference type="HOGENOM" id="CLU_014292_3_0_6"/>
<dbReference type="InParanoid" id="P28629"/>
<dbReference type="OMA" id="RVDTWNL"/>
<dbReference type="OrthoDB" id="9761189at2"/>
<dbReference type="PhylomeDB" id="P28629"/>
<dbReference type="BioCyc" id="EcoCyc:ARGDECARBOXDEG-MONOMER"/>
<dbReference type="BioCyc" id="MetaCyc:ARGDECARBOXDEG-MONOMER"/>
<dbReference type="BRENDA" id="4.1.1.19">
    <property type="organism ID" value="2026"/>
</dbReference>
<dbReference type="EvolutionaryTrace" id="P28629"/>
<dbReference type="PRO" id="PR:P28629"/>
<dbReference type="Proteomes" id="UP000000625">
    <property type="component" value="Chromosome"/>
</dbReference>
<dbReference type="GO" id="GO:0005829">
    <property type="term" value="C:cytosol"/>
    <property type="evidence" value="ECO:0007005"/>
    <property type="project" value="UniProtKB"/>
</dbReference>
<dbReference type="GO" id="GO:0008792">
    <property type="term" value="F:arginine decarboxylase activity"/>
    <property type="evidence" value="ECO:0000314"/>
    <property type="project" value="EcoliWiki"/>
</dbReference>
<dbReference type="GO" id="GO:0030170">
    <property type="term" value="F:pyridoxal phosphate binding"/>
    <property type="evidence" value="ECO:0000314"/>
    <property type="project" value="EcoCyc"/>
</dbReference>
<dbReference type="GO" id="GO:0006527">
    <property type="term" value="P:arginine catabolic process"/>
    <property type="evidence" value="ECO:0000314"/>
    <property type="project" value="EcoliWiki"/>
</dbReference>
<dbReference type="GO" id="GO:0051454">
    <property type="term" value="P:intracellular pH elevation"/>
    <property type="evidence" value="ECO:0000315"/>
    <property type="project" value="EcoCyc"/>
</dbReference>
<dbReference type="CDD" id="cd00615">
    <property type="entry name" value="Orn_deC_like"/>
    <property type="match status" value="1"/>
</dbReference>
<dbReference type="FunFam" id="3.40.50.2300:FF:000187">
    <property type="entry name" value="Biodegradative arginine decarboxylase"/>
    <property type="match status" value="1"/>
</dbReference>
<dbReference type="FunFam" id="3.90.100.10:FF:000002">
    <property type="entry name" value="Biodegradative arginine decarboxylase"/>
    <property type="match status" value="1"/>
</dbReference>
<dbReference type="FunFam" id="3.40.640.10:FF:000008">
    <property type="entry name" value="Lysine decarboxylase, inducible"/>
    <property type="match status" value="1"/>
</dbReference>
<dbReference type="FunFam" id="3.90.1150.10:FF:000016">
    <property type="entry name" value="Lysine decarboxylase, inducible"/>
    <property type="match status" value="1"/>
</dbReference>
<dbReference type="Gene3D" id="3.40.50.2300">
    <property type="match status" value="1"/>
</dbReference>
<dbReference type="Gene3D" id="3.90.1150.10">
    <property type="entry name" value="Aspartate Aminotransferase, domain 1"/>
    <property type="match status" value="1"/>
</dbReference>
<dbReference type="Gene3D" id="3.90.100.10">
    <property type="entry name" value="Orn/Lys/Arg decarboxylase, C-terminal domain"/>
    <property type="match status" value="1"/>
</dbReference>
<dbReference type="Gene3D" id="3.40.640.10">
    <property type="entry name" value="Type I PLP-dependent aspartate aminotransferase-like (Major domain)"/>
    <property type="match status" value="1"/>
</dbReference>
<dbReference type="InterPro" id="IPR005308">
    <property type="entry name" value="OKR_de-COase_N"/>
</dbReference>
<dbReference type="InterPro" id="IPR011193">
    <property type="entry name" value="Orn/lys/arg_de-COase"/>
</dbReference>
<dbReference type="InterPro" id="IPR000310">
    <property type="entry name" value="Orn/Lys/Arg_deCO2ase_major_dom"/>
</dbReference>
<dbReference type="InterPro" id="IPR008286">
    <property type="entry name" value="Prn/Lys/Arg_de-COase_C"/>
</dbReference>
<dbReference type="InterPro" id="IPR036633">
    <property type="entry name" value="Prn/Lys/Arg_de-COase_C_sf"/>
</dbReference>
<dbReference type="InterPro" id="IPR015424">
    <property type="entry name" value="PyrdxlP-dep_Trfase"/>
</dbReference>
<dbReference type="InterPro" id="IPR015421">
    <property type="entry name" value="PyrdxlP-dep_Trfase_major"/>
</dbReference>
<dbReference type="InterPro" id="IPR015422">
    <property type="entry name" value="PyrdxlP-dep_Trfase_small"/>
</dbReference>
<dbReference type="NCBIfam" id="NF011603">
    <property type="entry name" value="PRK15029.1"/>
    <property type="match status" value="1"/>
</dbReference>
<dbReference type="PANTHER" id="PTHR45229:SF3">
    <property type="entry name" value="BIODEGRADATIVE ARGININE DECARBOXYLASE"/>
    <property type="match status" value="1"/>
</dbReference>
<dbReference type="PANTHER" id="PTHR45229">
    <property type="entry name" value="CONSTITUTIVE ORNITHINE DECARBOXYLASE"/>
    <property type="match status" value="1"/>
</dbReference>
<dbReference type="Pfam" id="PF01276">
    <property type="entry name" value="OKR_DC_1"/>
    <property type="match status" value="1"/>
</dbReference>
<dbReference type="Pfam" id="PF03711">
    <property type="entry name" value="OKR_DC_1_C"/>
    <property type="match status" value="1"/>
</dbReference>
<dbReference type="Pfam" id="PF03709">
    <property type="entry name" value="OKR_DC_1_N"/>
    <property type="match status" value="1"/>
</dbReference>
<dbReference type="PIRSF" id="PIRSF009393">
    <property type="entry name" value="Orn_decarb"/>
    <property type="match status" value="1"/>
</dbReference>
<dbReference type="SUPFAM" id="SSF55904">
    <property type="entry name" value="Ornithine decarboxylase C-terminal domain"/>
    <property type="match status" value="1"/>
</dbReference>
<dbReference type="SUPFAM" id="SSF53383">
    <property type="entry name" value="PLP-dependent transferases"/>
    <property type="match status" value="1"/>
</dbReference>
<dbReference type="PROSITE" id="PS00703">
    <property type="entry name" value="OKR_DC_1"/>
    <property type="match status" value="1"/>
</dbReference>
<protein>
    <recommendedName>
        <fullName>Biodegradative arginine decarboxylase</fullName>
        <shortName>ADC</shortName>
        <ecNumber evidence="1">4.1.1.19</ecNumber>
    </recommendedName>
</protein>
<accession>P28629</accession>
<accession>P78138</accession>
<accession>Q2M6I7</accession>
<name>ADIA_ECOLI</name>
<reference key="1">
    <citation type="journal article" date="1993" name="J. Bacteriol.">
        <title>Nucleotide sequence of the adi gene, which encodes the biodegradative acid-induced arginine decarboxylase of Escherichia coli.</title>
        <authorList>
            <person name="Stim K.P."/>
            <person name="Bennett G.N."/>
        </authorList>
    </citation>
    <scope>NUCLEOTIDE SEQUENCE [GENOMIC DNA]</scope>
    <source>
        <strain>K12</strain>
    </source>
</reference>
<reference key="2">
    <citation type="journal article" date="1995" name="Nucleic Acids Res.">
        <title>Analysis of the Escherichia coli genome VI: DNA sequence of the region from 92.8 through 100 minutes.</title>
        <authorList>
            <person name="Burland V.D."/>
            <person name="Plunkett G. III"/>
            <person name="Sofia H.J."/>
            <person name="Daniels D.L."/>
            <person name="Blattner F.R."/>
        </authorList>
    </citation>
    <scope>NUCLEOTIDE SEQUENCE [LARGE SCALE GENOMIC DNA]</scope>
    <source>
        <strain>K12 / MG1655 / ATCC 47076</strain>
    </source>
</reference>
<reference key="3">
    <citation type="journal article" date="1997" name="Science">
        <title>The complete genome sequence of Escherichia coli K-12.</title>
        <authorList>
            <person name="Blattner F.R."/>
            <person name="Plunkett G. III"/>
            <person name="Bloch C.A."/>
            <person name="Perna N.T."/>
            <person name="Burland V."/>
            <person name="Riley M."/>
            <person name="Collado-Vides J."/>
            <person name="Glasner J.D."/>
            <person name="Rode C.K."/>
            <person name="Mayhew G.F."/>
            <person name="Gregor J."/>
            <person name="Davis N.W."/>
            <person name="Kirkpatrick H.A."/>
            <person name="Goeden M.A."/>
            <person name="Rose D.J."/>
            <person name="Mau B."/>
            <person name="Shao Y."/>
        </authorList>
    </citation>
    <scope>NUCLEOTIDE SEQUENCE [LARGE SCALE GENOMIC DNA]</scope>
    <source>
        <strain>K12 / MG1655 / ATCC 47076</strain>
    </source>
</reference>
<reference key="4">
    <citation type="journal article" date="2006" name="Mol. Syst. Biol.">
        <title>Highly accurate genome sequences of Escherichia coli K-12 strains MG1655 and W3110.</title>
        <authorList>
            <person name="Hayashi K."/>
            <person name="Morooka N."/>
            <person name="Yamamoto Y."/>
            <person name="Fujita K."/>
            <person name="Isono K."/>
            <person name="Choi S."/>
            <person name="Ohtsubo E."/>
            <person name="Baba T."/>
            <person name="Wanner B.L."/>
            <person name="Mori H."/>
            <person name="Horiuchi T."/>
        </authorList>
    </citation>
    <scope>NUCLEOTIDE SEQUENCE [LARGE SCALE GENOMIC DNA]</scope>
    <source>
        <strain>K12 / W3110 / ATCC 27325 / DSM 5911</strain>
    </source>
</reference>
<reference key="5">
    <citation type="journal article" date="1987" name="Gene">
        <title>Organisation of the regulatory region of the Escherichia coli melibiose operon.</title>
        <authorList>
            <person name="Webster C."/>
            <person name="Kempsell K."/>
            <person name="Booth I."/>
            <person name="Busby S."/>
        </authorList>
    </citation>
    <scope>NUCLEOTIDE SEQUENCE [GENOMIC DNA] OF 1-78</scope>
</reference>
<reference key="6">
    <citation type="journal article" date="1974" name="Biochemistry">
        <title>Chemical properties of Escherichia coli lysine decarboxylase including a segment of its pyridoxal 5'-phosphate binding site.</title>
        <authorList>
            <person name="Sabo D.L."/>
            <person name="Fischer E.H."/>
        </authorList>
    </citation>
    <scope>PROTEIN SEQUENCE OF 1-7</scope>
    <source>
        <strain>B</strain>
    </source>
</reference>
<reference key="7">
    <citation type="journal article" date="2003" name="J. Bacteriol.">
        <title>YjdE (AdiC) is the arginine:agmatine antiporter essential for arginine-dependent acid resistance in Escherichia coli.</title>
        <authorList>
            <person name="Gong S."/>
            <person name="Richard H."/>
            <person name="Foster J.W."/>
        </authorList>
    </citation>
    <scope>FUNCTION</scope>
    <scope>CATALYTIC ACTIVITY</scope>
    <scope>INDUCTION</scope>
    <scope>DISRUPTION PHENOTYPE</scope>
    <source>
        <strain>K12</strain>
    </source>
</reference>
<reference evidence="6" key="8">
    <citation type="journal article" date="2009" name="Biochemistry">
        <title>Crystal structure of the acid-induced arginine decarboxylase from Escherichia coli: reversible decamer assembly controls enzyme activity.</title>
        <authorList>
            <person name="Andrell J."/>
            <person name="Hicks M.G."/>
            <person name="Palmer T."/>
            <person name="Carpenter E.P."/>
            <person name="Iwata S."/>
            <person name="Maher M.J."/>
        </authorList>
    </citation>
    <scope>X-RAY CRYSTALLOGRAPHY (2.40 ANGSTROMS)</scope>
    <scope>ACTIVITY REGULATION</scope>
    <scope>COFACTOR</scope>
    <scope>PYRIDOXAL PHOSPHATE AT LYS-386</scope>
</reference>
<proteinExistence type="evidence at protein level"/>